<reference key="1">
    <citation type="submission" date="2008-04" db="EMBL/GenBank/DDBJ databases">
        <title>Complete sequence of chromosome of Methylobacterium populi BJ001.</title>
        <authorList>
            <consortium name="US DOE Joint Genome Institute"/>
            <person name="Copeland A."/>
            <person name="Lucas S."/>
            <person name="Lapidus A."/>
            <person name="Glavina del Rio T."/>
            <person name="Dalin E."/>
            <person name="Tice H."/>
            <person name="Bruce D."/>
            <person name="Goodwin L."/>
            <person name="Pitluck S."/>
            <person name="Chertkov O."/>
            <person name="Brettin T."/>
            <person name="Detter J.C."/>
            <person name="Han C."/>
            <person name="Kuske C.R."/>
            <person name="Schmutz J."/>
            <person name="Larimer F."/>
            <person name="Land M."/>
            <person name="Hauser L."/>
            <person name="Kyrpides N."/>
            <person name="Mikhailova N."/>
            <person name="Marx C."/>
            <person name="Richardson P."/>
        </authorList>
    </citation>
    <scope>NUCLEOTIDE SEQUENCE [LARGE SCALE GENOMIC DNA]</scope>
    <source>
        <strain>ATCC BAA-705 / NCIMB 13946 / BJ001</strain>
    </source>
</reference>
<gene>
    <name evidence="1" type="primary">rlmN</name>
    <name type="ordered locus">Mpop_1592</name>
</gene>
<feature type="chain" id="PRO_0000350254" description="Dual-specificity RNA methyltransferase RlmN">
    <location>
        <begin position="1"/>
        <end position="425"/>
    </location>
</feature>
<feature type="domain" description="Radical SAM core" evidence="2">
    <location>
        <begin position="142"/>
        <end position="389"/>
    </location>
</feature>
<feature type="active site" description="Proton acceptor" evidence="1">
    <location>
        <position position="136"/>
    </location>
</feature>
<feature type="active site" description="S-methylcysteine intermediate" evidence="1">
    <location>
        <position position="392"/>
    </location>
</feature>
<feature type="binding site" evidence="1">
    <location>
        <position position="156"/>
    </location>
    <ligand>
        <name>[4Fe-4S] cluster</name>
        <dbReference type="ChEBI" id="CHEBI:49883"/>
        <note>4Fe-4S-S-AdoMet</note>
    </ligand>
</feature>
<feature type="binding site" evidence="1">
    <location>
        <position position="160"/>
    </location>
    <ligand>
        <name>[4Fe-4S] cluster</name>
        <dbReference type="ChEBI" id="CHEBI:49883"/>
        <note>4Fe-4S-S-AdoMet</note>
    </ligand>
</feature>
<feature type="binding site" evidence="1">
    <location>
        <position position="163"/>
    </location>
    <ligand>
        <name>[4Fe-4S] cluster</name>
        <dbReference type="ChEBI" id="CHEBI:49883"/>
        <note>4Fe-4S-S-AdoMet</note>
    </ligand>
</feature>
<feature type="binding site" evidence="1">
    <location>
        <begin position="218"/>
        <end position="219"/>
    </location>
    <ligand>
        <name>S-adenosyl-L-methionine</name>
        <dbReference type="ChEBI" id="CHEBI:59789"/>
    </ligand>
</feature>
<feature type="binding site" evidence="1">
    <location>
        <position position="250"/>
    </location>
    <ligand>
        <name>S-adenosyl-L-methionine</name>
        <dbReference type="ChEBI" id="CHEBI:59789"/>
    </ligand>
</feature>
<feature type="binding site" evidence="1">
    <location>
        <begin position="272"/>
        <end position="274"/>
    </location>
    <ligand>
        <name>S-adenosyl-L-methionine</name>
        <dbReference type="ChEBI" id="CHEBI:59789"/>
    </ligand>
</feature>
<feature type="binding site" evidence="1">
    <location>
        <position position="349"/>
    </location>
    <ligand>
        <name>S-adenosyl-L-methionine</name>
        <dbReference type="ChEBI" id="CHEBI:59789"/>
    </ligand>
</feature>
<feature type="disulfide bond" description="(transient)" evidence="1">
    <location>
        <begin position="149"/>
        <end position="392"/>
    </location>
</feature>
<sequence length="425" mass="46644">MATASFDSAPGASRALPAIEKAPEVTALSTLPGRKASLVGLTREGLKQALIGIGVPERETRMRVSQIWHWLYVRGAREFSEMTNVGKGLKAQLAEHFTLDRPEVVTEQVSRDGTRKWLLRMAPTGAHDHNRGAEIECVYIPGDDRGTLCVSSQVGCTLTCSFCHTGTQRLVRNLSTAEIVSQLVVARDALGDFTGQMPGKDGGEVGRLVTNIVFMGMGEPLYNLDAVIDAIAVMSDQEGLALSRRRITVSTSGVVPQIERLGLEANAMLAISLHAVRDELRDELVPLNRKYPIAQLLEACRNYPGLSNARRITFEYVMLKGVNDSDADARALVRLLKGIPAKINLIPFNPWPGSKYECSDWERIERFSEFVFNAGYASPVRTPRGRDILAACGQLKSETEKLRARARMMLEEGMGAEAVYADQVD</sequence>
<dbReference type="EC" id="2.1.1.192" evidence="1"/>
<dbReference type="EMBL" id="CP001029">
    <property type="protein sequence ID" value="ACB79756.1"/>
    <property type="molecule type" value="Genomic_DNA"/>
</dbReference>
<dbReference type="RefSeq" id="WP_012453504.1">
    <property type="nucleotide sequence ID" value="NC_010725.1"/>
</dbReference>
<dbReference type="SMR" id="B1ZG98"/>
<dbReference type="STRING" id="441620.Mpop_1592"/>
<dbReference type="KEGG" id="mpo:Mpop_1592"/>
<dbReference type="eggNOG" id="COG0820">
    <property type="taxonomic scope" value="Bacteria"/>
</dbReference>
<dbReference type="HOGENOM" id="CLU_029101_0_0_5"/>
<dbReference type="OrthoDB" id="9793973at2"/>
<dbReference type="Proteomes" id="UP000007136">
    <property type="component" value="Chromosome"/>
</dbReference>
<dbReference type="GO" id="GO:0005737">
    <property type="term" value="C:cytoplasm"/>
    <property type="evidence" value="ECO:0007669"/>
    <property type="project" value="UniProtKB-SubCell"/>
</dbReference>
<dbReference type="GO" id="GO:0051539">
    <property type="term" value="F:4 iron, 4 sulfur cluster binding"/>
    <property type="evidence" value="ECO:0007669"/>
    <property type="project" value="UniProtKB-UniRule"/>
</dbReference>
<dbReference type="GO" id="GO:0046872">
    <property type="term" value="F:metal ion binding"/>
    <property type="evidence" value="ECO:0007669"/>
    <property type="project" value="UniProtKB-KW"/>
</dbReference>
<dbReference type="GO" id="GO:0070040">
    <property type="term" value="F:rRNA (adenine(2503)-C2-)-methyltransferase activity"/>
    <property type="evidence" value="ECO:0007669"/>
    <property type="project" value="UniProtKB-UniRule"/>
</dbReference>
<dbReference type="GO" id="GO:0019843">
    <property type="term" value="F:rRNA binding"/>
    <property type="evidence" value="ECO:0007669"/>
    <property type="project" value="UniProtKB-UniRule"/>
</dbReference>
<dbReference type="GO" id="GO:0002935">
    <property type="term" value="F:tRNA (adenine(37)-C2)-methyltransferase activity"/>
    <property type="evidence" value="ECO:0007669"/>
    <property type="project" value="UniProtKB-UniRule"/>
</dbReference>
<dbReference type="GO" id="GO:0000049">
    <property type="term" value="F:tRNA binding"/>
    <property type="evidence" value="ECO:0007669"/>
    <property type="project" value="UniProtKB-UniRule"/>
</dbReference>
<dbReference type="GO" id="GO:0070475">
    <property type="term" value="P:rRNA base methylation"/>
    <property type="evidence" value="ECO:0007669"/>
    <property type="project" value="UniProtKB-UniRule"/>
</dbReference>
<dbReference type="GO" id="GO:0030488">
    <property type="term" value="P:tRNA methylation"/>
    <property type="evidence" value="ECO:0007669"/>
    <property type="project" value="UniProtKB-UniRule"/>
</dbReference>
<dbReference type="CDD" id="cd01335">
    <property type="entry name" value="Radical_SAM"/>
    <property type="match status" value="1"/>
</dbReference>
<dbReference type="FunFam" id="3.20.20.70:FF:000008">
    <property type="entry name" value="Dual-specificity RNA methyltransferase RlmN"/>
    <property type="match status" value="1"/>
</dbReference>
<dbReference type="Gene3D" id="1.10.150.530">
    <property type="match status" value="1"/>
</dbReference>
<dbReference type="Gene3D" id="3.20.20.70">
    <property type="entry name" value="Aldolase class I"/>
    <property type="match status" value="1"/>
</dbReference>
<dbReference type="HAMAP" id="MF_01849">
    <property type="entry name" value="RNA_methyltr_RlmN"/>
    <property type="match status" value="1"/>
</dbReference>
<dbReference type="InterPro" id="IPR013785">
    <property type="entry name" value="Aldolase_TIM"/>
</dbReference>
<dbReference type="InterPro" id="IPR006638">
    <property type="entry name" value="Elp3/MiaA/NifB-like_rSAM"/>
</dbReference>
<dbReference type="InterPro" id="IPR040072">
    <property type="entry name" value="Methyltransferase_A"/>
</dbReference>
<dbReference type="InterPro" id="IPR048641">
    <property type="entry name" value="RlmN_N"/>
</dbReference>
<dbReference type="InterPro" id="IPR027492">
    <property type="entry name" value="RNA_MTrfase_RlmN"/>
</dbReference>
<dbReference type="InterPro" id="IPR004383">
    <property type="entry name" value="rRNA_lsu_MTrfase_RlmN/Cfr"/>
</dbReference>
<dbReference type="InterPro" id="IPR007197">
    <property type="entry name" value="rSAM"/>
</dbReference>
<dbReference type="NCBIfam" id="TIGR00048">
    <property type="entry name" value="rRNA_mod_RlmN"/>
    <property type="match status" value="1"/>
</dbReference>
<dbReference type="PANTHER" id="PTHR30544">
    <property type="entry name" value="23S RRNA METHYLTRANSFERASE"/>
    <property type="match status" value="1"/>
</dbReference>
<dbReference type="PANTHER" id="PTHR30544:SF5">
    <property type="entry name" value="RADICAL SAM CORE DOMAIN-CONTAINING PROTEIN"/>
    <property type="match status" value="1"/>
</dbReference>
<dbReference type="Pfam" id="PF04055">
    <property type="entry name" value="Radical_SAM"/>
    <property type="match status" value="1"/>
</dbReference>
<dbReference type="Pfam" id="PF21016">
    <property type="entry name" value="RlmN_N"/>
    <property type="match status" value="1"/>
</dbReference>
<dbReference type="PIRSF" id="PIRSF006004">
    <property type="entry name" value="CHP00048"/>
    <property type="match status" value="1"/>
</dbReference>
<dbReference type="SFLD" id="SFLDF00275">
    <property type="entry name" value="adenosine_C2_methyltransferase"/>
    <property type="match status" value="1"/>
</dbReference>
<dbReference type="SFLD" id="SFLDS00029">
    <property type="entry name" value="Radical_SAM"/>
    <property type="match status" value="1"/>
</dbReference>
<dbReference type="SMART" id="SM00729">
    <property type="entry name" value="Elp3"/>
    <property type="match status" value="1"/>
</dbReference>
<dbReference type="SUPFAM" id="SSF102114">
    <property type="entry name" value="Radical SAM enzymes"/>
    <property type="match status" value="1"/>
</dbReference>
<dbReference type="PROSITE" id="PS51918">
    <property type="entry name" value="RADICAL_SAM"/>
    <property type="match status" value="1"/>
</dbReference>
<name>RLMN_METPB</name>
<comment type="function">
    <text evidence="1">Specifically methylates position 2 of adenine 2503 in 23S rRNA and position 2 of adenine 37 in tRNAs. m2A2503 modification seems to play a crucial role in the proofreading step occurring at the peptidyl transferase center and thus would serve to optimize ribosomal fidelity.</text>
</comment>
<comment type="catalytic activity">
    <reaction evidence="1">
        <text>adenosine(2503) in 23S rRNA + 2 reduced [2Fe-2S]-[ferredoxin] + 2 S-adenosyl-L-methionine = 2-methyladenosine(2503) in 23S rRNA + 5'-deoxyadenosine + L-methionine + 2 oxidized [2Fe-2S]-[ferredoxin] + S-adenosyl-L-homocysteine</text>
        <dbReference type="Rhea" id="RHEA:42916"/>
        <dbReference type="Rhea" id="RHEA-COMP:10000"/>
        <dbReference type="Rhea" id="RHEA-COMP:10001"/>
        <dbReference type="Rhea" id="RHEA-COMP:10152"/>
        <dbReference type="Rhea" id="RHEA-COMP:10282"/>
        <dbReference type="ChEBI" id="CHEBI:17319"/>
        <dbReference type="ChEBI" id="CHEBI:33737"/>
        <dbReference type="ChEBI" id="CHEBI:33738"/>
        <dbReference type="ChEBI" id="CHEBI:57844"/>
        <dbReference type="ChEBI" id="CHEBI:57856"/>
        <dbReference type="ChEBI" id="CHEBI:59789"/>
        <dbReference type="ChEBI" id="CHEBI:74411"/>
        <dbReference type="ChEBI" id="CHEBI:74497"/>
        <dbReference type="EC" id="2.1.1.192"/>
    </reaction>
</comment>
<comment type="catalytic activity">
    <reaction evidence="1">
        <text>adenosine(37) in tRNA + 2 reduced [2Fe-2S]-[ferredoxin] + 2 S-adenosyl-L-methionine = 2-methyladenosine(37) in tRNA + 5'-deoxyadenosine + L-methionine + 2 oxidized [2Fe-2S]-[ferredoxin] + S-adenosyl-L-homocysteine</text>
        <dbReference type="Rhea" id="RHEA:43332"/>
        <dbReference type="Rhea" id="RHEA-COMP:10000"/>
        <dbReference type="Rhea" id="RHEA-COMP:10001"/>
        <dbReference type="Rhea" id="RHEA-COMP:10162"/>
        <dbReference type="Rhea" id="RHEA-COMP:10485"/>
        <dbReference type="ChEBI" id="CHEBI:17319"/>
        <dbReference type="ChEBI" id="CHEBI:33737"/>
        <dbReference type="ChEBI" id="CHEBI:33738"/>
        <dbReference type="ChEBI" id="CHEBI:57844"/>
        <dbReference type="ChEBI" id="CHEBI:57856"/>
        <dbReference type="ChEBI" id="CHEBI:59789"/>
        <dbReference type="ChEBI" id="CHEBI:74411"/>
        <dbReference type="ChEBI" id="CHEBI:74497"/>
        <dbReference type="EC" id="2.1.1.192"/>
    </reaction>
</comment>
<comment type="cofactor">
    <cofactor evidence="1">
        <name>[4Fe-4S] cluster</name>
        <dbReference type="ChEBI" id="CHEBI:49883"/>
    </cofactor>
    <text evidence="1">Binds 1 [4Fe-4S] cluster. The cluster is coordinated with 3 cysteines and an exchangeable S-adenosyl-L-methionine.</text>
</comment>
<comment type="subcellular location">
    <subcellularLocation>
        <location evidence="1">Cytoplasm</location>
    </subcellularLocation>
</comment>
<comment type="miscellaneous">
    <text evidence="1">Reaction proceeds by a ping-pong mechanism involving intermediate methylation of a conserved cysteine residue.</text>
</comment>
<comment type="similarity">
    <text evidence="1">Belongs to the radical SAM superfamily. RlmN family.</text>
</comment>
<evidence type="ECO:0000255" key="1">
    <source>
        <dbReference type="HAMAP-Rule" id="MF_01849"/>
    </source>
</evidence>
<evidence type="ECO:0000255" key="2">
    <source>
        <dbReference type="PROSITE-ProRule" id="PRU01266"/>
    </source>
</evidence>
<keyword id="KW-0004">4Fe-4S</keyword>
<keyword id="KW-0963">Cytoplasm</keyword>
<keyword id="KW-1015">Disulfide bond</keyword>
<keyword id="KW-0408">Iron</keyword>
<keyword id="KW-0411">Iron-sulfur</keyword>
<keyword id="KW-0479">Metal-binding</keyword>
<keyword id="KW-0489">Methyltransferase</keyword>
<keyword id="KW-0698">rRNA processing</keyword>
<keyword id="KW-0949">S-adenosyl-L-methionine</keyword>
<keyword id="KW-0808">Transferase</keyword>
<keyword id="KW-0819">tRNA processing</keyword>
<accession>B1ZG98</accession>
<proteinExistence type="inferred from homology"/>
<protein>
    <recommendedName>
        <fullName evidence="1">Dual-specificity RNA methyltransferase RlmN</fullName>
        <ecNumber evidence="1">2.1.1.192</ecNumber>
    </recommendedName>
    <alternativeName>
        <fullName evidence="1">23S rRNA (adenine(2503)-C(2))-methyltransferase</fullName>
    </alternativeName>
    <alternativeName>
        <fullName evidence="1">23S rRNA m2A2503 methyltransferase</fullName>
    </alternativeName>
    <alternativeName>
        <fullName evidence="1">Ribosomal RNA large subunit methyltransferase N</fullName>
    </alternativeName>
    <alternativeName>
        <fullName evidence="1">tRNA (adenine(37)-C(2))-methyltransferase</fullName>
    </alternativeName>
    <alternativeName>
        <fullName evidence="1">tRNA m2A37 methyltransferase</fullName>
    </alternativeName>
</protein>
<organism>
    <name type="scientific">Methylorubrum populi (strain ATCC BAA-705 / NCIMB 13946 / BJ001)</name>
    <name type="common">Methylobacterium populi</name>
    <dbReference type="NCBI Taxonomy" id="441620"/>
    <lineage>
        <taxon>Bacteria</taxon>
        <taxon>Pseudomonadati</taxon>
        <taxon>Pseudomonadota</taxon>
        <taxon>Alphaproteobacteria</taxon>
        <taxon>Hyphomicrobiales</taxon>
        <taxon>Methylobacteriaceae</taxon>
        <taxon>Methylorubrum</taxon>
    </lineage>
</organism>